<comment type="catalytic activity">
    <reaction evidence="1">
        <text>(2R)-O-phospho-3-sulfolactate + H2O = (2R)-3-sulfolactate + phosphate</text>
        <dbReference type="Rhea" id="RHEA:23416"/>
        <dbReference type="ChEBI" id="CHEBI:15377"/>
        <dbReference type="ChEBI" id="CHEBI:15597"/>
        <dbReference type="ChEBI" id="CHEBI:43474"/>
        <dbReference type="ChEBI" id="CHEBI:58738"/>
        <dbReference type="EC" id="3.1.3.71"/>
    </reaction>
</comment>
<comment type="cofactor">
    <cofactor evidence="1">
        <name>Mg(2+)</name>
        <dbReference type="ChEBI" id="CHEBI:18420"/>
    </cofactor>
</comment>
<comment type="similarity">
    <text evidence="1">Belongs to the ComB family.</text>
</comment>
<evidence type="ECO:0000255" key="1">
    <source>
        <dbReference type="HAMAP-Rule" id="MF_00490"/>
    </source>
</evidence>
<accession>A5GKJ5</accession>
<dbReference type="EC" id="3.1.3.71" evidence="1"/>
<dbReference type="EMBL" id="CT971583">
    <property type="protein sequence ID" value="CAK23460.1"/>
    <property type="molecule type" value="Genomic_DNA"/>
</dbReference>
<dbReference type="SMR" id="A5GKJ5"/>
<dbReference type="STRING" id="32051.SynWH7803_1034"/>
<dbReference type="KEGG" id="syx:SynWH7803_1034"/>
<dbReference type="eggNOG" id="COG2045">
    <property type="taxonomic scope" value="Bacteria"/>
</dbReference>
<dbReference type="HOGENOM" id="CLU_070028_0_1_3"/>
<dbReference type="OrthoDB" id="4913at2"/>
<dbReference type="Proteomes" id="UP000001566">
    <property type="component" value="Chromosome"/>
</dbReference>
<dbReference type="GO" id="GO:0050532">
    <property type="term" value="F:2-phosphosulfolactate phosphatase activity"/>
    <property type="evidence" value="ECO:0007669"/>
    <property type="project" value="UniProtKB-UniRule"/>
</dbReference>
<dbReference type="GO" id="GO:0000287">
    <property type="term" value="F:magnesium ion binding"/>
    <property type="evidence" value="ECO:0007669"/>
    <property type="project" value="UniProtKB-UniRule"/>
</dbReference>
<dbReference type="GO" id="GO:0050545">
    <property type="term" value="F:sulfopyruvate decarboxylase activity"/>
    <property type="evidence" value="ECO:0007669"/>
    <property type="project" value="TreeGrafter"/>
</dbReference>
<dbReference type="FunFam" id="3.90.1560.10:FF:000001">
    <property type="entry name" value="Probable 2-phosphosulfolactate phosphatase"/>
    <property type="match status" value="1"/>
</dbReference>
<dbReference type="Gene3D" id="3.90.1560.10">
    <property type="entry name" value="ComB-like"/>
    <property type="match status" value="1"/>
</dbReference>
<dbReference type="HAMAP" id="MF_00490">
    <property type="entry name" value="ComB"/>
    <property type="match status" value="1"/>
</dbReference>
<dbReference type="InterPro" id="IPR005238">
    <property type="entry name" value="ComB-like"/>
</dbReference>
<dbReference type="InterPro" id="IPR036702">
    <property type="entry name" value="ComB-like_sf"/>
</dbReference>
<dbReference type="NCBIfam" id="NF002053">
    <property type="entry name" value="PRK00886.1-2"/>
    <property type="match status" value="1"/>
</dbReference>
<dbReference type="PANTHER" id="PTHR37311">
    <property type="entry name" value="2-PHOSPHOSULFOLACTATE PHOSPHATASE-RELATED"/>
    <property type="match status" value="1"/>
</dbReference>
<dbReference type="PANTHER" id="PTHR37311:SF1">
    <property type="entry name" value="2-PHOSPHOSULFOLACTATE PHOSPHATASE-RELATED"/>
    <property type="match status" value="1"/>
</dbReference>
<dbReference type="Pfam" id="PF04029">
    <property type="entry name" value="2-ph_phosp"/>
    <property type="match status" value="1"/>
</dbReference>
<dbReference type="SUPFAM" id="SSF142823">
    <property type="entry name" value="ComB-like"/>
    <property type="match status" value="1"/>
</dbReference>
<reference key="1">
    <citation type="submission" date="2006-05" db="EMBL/GenBank/DDBJ databases">
        <authorList>
            <consortium name="Genoscope"/>
        </authorList>
    </citation>
    <scope>NUCLEOTIDE SEQUENCE [LARGE SCALE GENOMIC DNA]</scope>
    <source>
        <strain>WH7803</strain>
    </source>
</reference>
<name>COMB_SYNPW</name>
<gene>
    <name evidence="1" type="primary">comB</name>
    <name type="ordered locus">SynWH7803_1034</name>
</gene>
<sequence length="246" mass="26525">MQVSYFHVAADVPDAIGSVEGPDAAVVIDVLRATTTIAWALHNGAEAVQAFADLDELRLQSRNWPEQTRLLLGERGGRMLEGFDLGNSPVAVIPEVVQGKRLFMSTTNGTRALQRVRDVSVVMTVALPNRQAVAQRLLRDQPERVWMVGSGWEGTYSLEDSLAAGALADALVAAGAQVANDELQAALALWAQWKHDPEACLRVASHGQRLTRLGNHDADFSCCAGLDQLSVVPTQTEPGVLRAIRV</sequence>
<protein>
    <recommendedName>
        <fullName evidence="1">Probable 2-phosphosulfolactate phosphatase</fullName>
        <ecNumber evidence="1">3.1.3.71</ecNumber>
    </recommendedName>
</protein>
<feature type="chain" id="PRO_1000014471" description="Probable 2-phosphosulfolactate phosphatase">
    <location>
        <begin position="1"/>
        <end position="246"/>
    </location>
</feature>
<proteinExistence type="inferred from homology"/>
<organism>
    <name type="scientific">Synechococcus sp. (strain WH7803)</name>
    <dbReference type="NCBI Taxonomy" id="32051"/>
    <lineage>
        <taxon>Bacteria</taxon>
        <taxon>Bacillati</taxon>
        <taxon>Cyanobacteriota</taxon>
        <taxon>Cyanophyceae</taxon>
        <taxon>Synechococcales</taxon>
        <taxon>Synechococcaceae</taxon>
        <taxon>Synechococcus</taxon>
    </lineage>
</organism>
<keyword id="KW-0378">Hydrolase</keyword>
<keyword id="KW-0460">Magnesium</keyword>
<keyword id="KW-1185">Reference proteome</keyword>